<dbReference type="EC" id="1.6.2.2" evidence="1"/>
<dbReference type="EMBL" id="AB125163">
    <property type="protein sequence ID" value="BAD51951.1"/>
    <property type="molecule type" value="mRNA"/>
</dbReference>
<dbReference type="SMR" id="Q60HG4"/>
<dbReference type="STRING" id="9541.ENSMFAP00000015991"/>
<dbReference type="eggNOG" id="KOG0534">
    <property type="taxonomic scope" value="Eukaryota"/>
</dbReference>
<dbReference type="Proteomes" id="UP000233100">
    <property type="component" value="Unplaced"/>
</dbReference>
<dbReference type="GO" id="GO:0005789">
    <property type="term" value="C:endoplasmic reticulum membrane"/>
    <property type="evidence" value="ECO:0000250"/>
    <property type="project" value="UniProtKB"/>
</dbReference>
<dbReference type="GO" id="GO:0005741">
    <property type="term" value="C:mitochondrial outer membrane"/>
    <property type="evidence" value="ECO:0000250"/>
    <property type="project" value="UniProtKB"/>
</dbReference>
<dbReference type="GO" id="GO:0004128">
    <property type="term" value="F:cytochrome-b5 reductase activity, acting on NAD(P)H"/>
    <property type="evidence" value="ECO:0000250"/>
    <property type="project" value="UniProtKB"/>
</dbReference>
<dbReference type="GO" id="GO:0071949">
    <property type="term" value="F:FAD binding"/>
    <property type="evidence" value="ECO:0000250"/>
    <property type="project" value="UniProtKB"/>
</dbReference>
<dbReference type="GO" id="GO:0006695">
    <property type="term" value="P:cholesterol biosynthetic process"/>
    <property type="evidence" value="ECO:0007669"/>
    <property type="project" value="UniProtKB-KW"/>
</dbReference>
<dbReference type="CDD" id="cd06183">
    <property type="entry name" value="cyt_b5_reduct_like"/>
    <property type="match status" value="1"/>
</dbReference>
<dbReference type="FunFam" id="2.40.30.10:FF:000021">
    <property type="entry name" value="NADH-cytochrome b5 reductase"/>
    <property type="match status" value="1"/>
</dbReference>
<dbReference type="FunFam" id="3.40.50.80:FF:000005">
    <property type="entry name" value="NADH-cytochrome b5 reductase"/>
    <property type="match status" value="1"/>
</dbReference>
<dbReference type="Gene3D" id="3.40.50.80">
    <property type="entry name" value="Nucleotide-binding domain of ferredoxin-NADP reductase (FNR) module"/>
    <property type="match status" value="1"/>
</dbReference>
<dbReference type="Gene3D" id="2.40.30.10">
    <property type="entry name" value="Translation factors"/>
    <property type="match status" value="1"/>
</dbReference>
<dbReference type="InterPro" id="IPR001834">
    <property type="entry name" value="CBR-like"/>
</dbReference>
<dbReference type="InterPro" id="IPR008333">
    <property type="entry name" value="Cbr1-like_FAD-bd_dom"/>
</dbReference>
<dbReference type="InterPro" id="IPR017927">
    <property type="entry name" value="FAD-bd_FR_type"/>
</dbReference>
<dbReference type="InterPro" id="IPR001709">
    <property type="entry name" value="Flavoprot_Pyr_Nucl_cyt_Rdtase"/>
</dbReference>
<dbReference type="InterPro" id="IPR039261">
    <property type="entry name" value="FNR_nucleotide-bd"/>
</dbReference>
<dbReference type="InterPro" id="IPR001433">
    <property type="entry name" value="OxRdtase_FAD/NAD-bd"/>
</dbReference>
<dbReference type="InterPro" id="IPR017938">
    <property type="entry name" value="Riboflavin_synthase-like_b-brl"/>
</dbReference>
<dbReference type="PANTHER" id="PTHR19370">
    <property type="entry name" value="NADH-CYTOCHROME B5 REDUCTASE"/>
    <property type="match status" value="1"/>
</dbReference>
<dbReference type="PANTHER" id="PTHR19370:SF121">
    <property type="entry name" value="NADH-CYTOCHROME B5 REDUCTASE 3"/>
    <property type="match status" value="1"/>
</dbReference>
<dbReference type="Pfam" id="PF00970">
    <property type="entry name" value="FAD_binding_6"/>
    <property type="match status" value="1"/>
</dbReference>
<dbReference type="Pfam" id="PF00175">
    <property type="entry name" value="NAD_binding_1"/>
    <property type="match status" value="1"/>
</dbReference>
<dbReference type="PRINTS" id="PR00406">
    <property type="entry name" value="CYTB5RDTASE"/>
</dbReference>
<dbReference type="PRINTS" id="PR00371">
    <property type="entry name" value="FPNCR"/>
</dbReference>
<dbReference type="SUPFAM" id="SSF52343">
    <property type="entry name" value="Ferredoxin reductase-like, C-terminal NADP-linked domain"/>
    <property type="match status" value="1"/>
</dbReference>
<dbReference type="SUPFAM" id="SSF63380">
    <property type="entry name" value="Riboflavin synthase domain-like"/>
    <property type="match status" value="1"/>
</dbReference>
<dbReference type="PROSITE" id="PS51384">
    <property type="entry name" value="FAD_FR"/>
    <property type="match status" value="1"/>
</dbReference>
<keyword id="KW-0007">Acetylation</keyword>
<keyword id="KW-0877">Alternative promoter usage</keyword>
<keyword id="KW-0152">Cholesterol biosynthesis</keyword>
<keyword id="KW-0153">Cholesterol metabolism</keyword>
<keyword id="KW-0256">Endoplasmic reticulum</keyword>
<keyword id="KW-0274">FAD</keyword>
<keyword id="KW-0285">Flavoprotein</keyword>
<keyword id="KW-0444">Lipid biosynthesis</keyword>
<keyword id="KW-0443">Lipid metabolism</keyword>
<keyword id="KW-0449">Lipoprotein</keyword>
<keyword id="KW-0472">Membrane</keyword>
<keyword id="KW-0496">Mitochondrion</keyword>
<keyword id="KW-1000">Mitochondrion outer membrane</keyword>
<keyword id="KW-0519">Myristate</keyword>
<keyword id="KW-0520">NAD</keyword>
<keyword id="KW-0560">Oxidoreductase</keyword>
<keyword id="KW-0597">Phosphoprotein</keyword>
<keyword id="KW-1185">Reference proteome</keyword>
<keyword id="KW-0752">Steroid biosynthesis</keyword>
<keyword id="KW-0753">Steroid metabolism</keyword>
<keyword id="KW-0756">Sterol biosynthesis</keyword>
<keyword id="KW-1207">Sterol metabolism</keyword>
<proteinExistence type="evidence at transcript level"/>
<gene>
    <name type="primary">CYB5R3</name>
    <name type="synonym">DIA1</name>
    <name type="ORF">QccE-21146</name>
</gene>
<protein>
    <recommendedName>
        <fullName evidence="7">NADH-cytochrome b5 reductase 3</fullName>
        <shortName>B5R</shortName>
        <shortName>Cytochrome b5 reductase</shortName>
        <ecNumber evidence="1">1.6.2.2</ecNumber>
    </recommendedName>
    <alternativeName>
        <fullName evidence="1">Diaphorase-1</fullName>
    </alternativeName>
</protein>
<accession>Q60HG4</accession>
<name>NB5R3_MACFA</name>
<feature type="initiator methionine" description="Removed" evidence="2">
    <location>
        <position position="1"/>
    </location>
</feature>
<feature type="chain" id="PRO_0000019395" description="NADH-cytochrome b5 reductase 3">
    <location>
        <begin position="2"/>
        <end position="301"/>
    </location>
</feature>
<feature type="domain" description="FAD-binding FR-type" evidence="6">
    <location>
        <begin position="40"/>
        <end position="152"/>
    </location>
</feature>
<feature type="binding site" evidence="1">
    <location>
        <position position="92"/>
    </location>
    <ligand>
        <name>FAD</name>
        <dbReference type="ChEBI" id="CHEBI:57692"/>
    </ligand>
</feature>
<feature type="binding site" evidence="1">
    <location>
        <position position="93"/>
    </location>
    <ligand>
        <name>FAD</name>
        <dbReference type="ChEBI" id="CHEBI:57692"/>
    </ligand>
</feature>
<feature type="binding site" evidence="1">
    <location>
        <position position="94"/>
    </location>
    <ligand>
        <name>FAD</name>
        <dbReference type="ChEBI" id="CHEBI:57692"/>
    </ligand>
</feature>
<feature type="binding site" evidence="1">
    <location>
        <position position="109"/>
    </location>
    <ligand>
        <name>FAD</name>
        <dbReference type="ChEBI" id="CHEBI:57692"/>
    </ligand>
</feature>
<feature type="binding site" evidence="1">
    <location>
        <position position="111"/>
    </location>
    <ligand>
        <name>FAD</name>
        <dbReference type="ChEBI" id="CHEBI:57692"/>
    </ligand>
</feature>
<feature type="binding site" evidence="1">
    <location>
        <position position="114"/>
    </location>
    <ligand>
        <name>FAD</name>
        <dbReference type="ChEBI" id="CHEBI:57692"/>
    </ligand>
</feature>
<feature type="binding site" evidence="1">
    <location>
        <position position="126"/>
    </location>
    <ligand>
        <name>FAD</name>
        <dbReference type="ChEBI" id="CHEBI:57692"/>
    </ligand>
</feature>
<feature type="binding site" evidence="1">
    <location>
        <position position="127"/>
    </location>
    <ligand>
        <name>FAD</name>
        <dbReference type="ChEBI" id="CHEBI:57692"/>
    </ligand>
</feature>
<feature type="binding site" evidence="1">
    <location>
        <position position="128"/>
    </location>
    <ligand>
        <name>FAD</name>
        <dbReference type="ChEBI" id="CHEBI:57692"/>
    </ligand>
</feature>
<feature type="binding site" evidence="1">
    <location>
        <position position="185"/>
    </location>
    <ligand>
        <name>FAD</name>
        <dbReference type="ChEBI" id="CHEBI:57692"/>
    </ligand>
</feature>
<feature type="modified residue" description="N6-acetyllysine" evidence="1">
    <location>
        <position position="42"/>
    </location>
</feature>
<feature type="modified residue" description="Phosphotyrosine" evidence="1">
    <location>
        <position position="43"/>
    </location>
</feature>
<feature type="modified residue" description="N6-acetyllysine" evidence="5">
    <location>
        <position position="120"/>
    </location>
</feature>
<feature type="lipid moiety-binding region" description="N-myristoyl glycine" evidence="1">
    <location>
        <position position="2"/>
    </location>
</feature>
<feature type="splice variant" id="VSP_013359" description="In isoform 2." evidence="7">
    <location>
        <begin position="1"/>
        <end position="23"/>
    </location>
</feature>
<sequence length="301" mass="34142">MGAQLSTLGHVVLSPVWFLYSLLMKLFRCSTPAITLESPDIKYSLRLIDREIISHDTRRFRFALPSPQHILGLPVGQHIYLSARIDGNLVIRPYTPVSSDDDKGFVDLVIKVYFKDTHPKFPAGGKMSQYLESMQIGDTIEFRGPNGLLVYQGKGKFAIRPDKKSNPVIKTVKSVGMIAGGTGITPMLQVIRAIMKDPDDHTVCHLLFANQTEKDILLRPELEELRNEHSARFKLWYTLDRAPEAWDYSQGFVNEEMIRDHLPPPEEEPLVLMCGPPPMIQYACLPNLDRVGHPKERCFAF</sequence>
<evidence type="ECO:0000250" key="1">
    <source>
        <dbReference type="UniProtKB" id="P00387"/>
    </source>
</evidence>
<evidence type="ECO:0000250" key="2">
    <source>
        <dbReference type="UniProtKB" id="P07514"/>
    </source>
</evidence>
<evidence type="ECO:0000250" key="3">
    <source>
        <dbReference type="UniProtKB" id="P20070"/>
    </source>
</evidence>
<evidence type="ECO:0000250" key="4">
    <source>
        <dbReference type="UniProtKB" id="P83686"/>
    </source>
</evidence>
<evidence type="ECO:0000250" key="5">
    <source>
        <dbReference type="UniProtKB" id="Q9DCN2"/>
    </source>
</evidence>
<evidence type="ECO:0000255" key="6">
    <source>
        <dbReference type="PROSITE-ProRule" id="PRU00716"/>
    </source>
</evidence>
<evidence type="ECO:0000305" key="7"/>
<reference key="1">
    <citation type="submission" date="2003-10" db="EMBL/GenBank/DDBJ databases">
        <title>Isolation and characterization of cDNA for macaque neurological disease genes.</title>
        <authorList>
            <person name="Kusuda J."/>
            <person name="Osada N."/>
            <person name="Tanuma R."/>
            <person name="Hirata M."/>
            <person name="Sugano S."/>
            <person name="Hashimoto K."/>
        </authorList>
    </citation>
    <scope>NUCLEOTIDE SEQUENCE [LARGE SCALE MRNA]</scope>
    <source>
        <tissue>Brain cortex</tissue>
    </source>
</reference>
<organism>
    <name type="scientific">Macaca fascicularis</name>
    <name type="common">Crab-eating macaque</name>
    <name type="synonym">Cynomolgus monkey</name>
    <dbReference type="NCBI Taxonomy" id="9541"/>
    <lineage>
        <taxon>Eukaryota</taxon>
        <taxon>Metazoa</taxon>
        <taxon>Chordata</taxon>
        <taxon>Craniata</taxon>
        <taxon>Vertebrata</taxon>
        <taxon>Euteleostomi</taxon>
        <taxon>Mammalia</taxon>
        <taxon>Eutheria</taxon>
        <taxon>Euarchontoglires</taxon>
        <taxon>Primates</taxon>
        <taxon>Haplorrhini</taxon>
        <taxon>Catarrhini</taxon>
        <taxon>Cercopithecidae</taxon>
        <taxon>Cercopithecinae</taxon>
        <taxon>Macaca</taxon>
    </lineage>
</organism>
<comment type="function">
    <text evidence="1">Catalyzes the reduction of two molecules of cytochrome b5 using NADH as the electron donor.</text>
</comment>
<comment type="catalytic activity">
    <reaction evidence="1">
        <text>2 Fe(III)-[cytochrome b5] + NADH = 2 Fe(II)-[cytochrome b5] + NAD(+) + H(+)</text>
        <dbReference type="Rhea" id="RHEA:46680"/>
        <dbReference type="Rhea" id="RHEA-COMP:10438"/>
        <dbReference type="Rhea" id="RHEA-COMP:10439"/>
        <dbReference type="ChEBI" id="CHEBI:15378"/>
        <dbReference type="ChEBI" id="CHEBI:29033"/>
        <dbReference type="ChEBI" id="CHEBI:29034"/>
        <dbReference type="ChEBI" id="CHEBI:57540"/>
        <dbReference type="ChEBI" id="CHEBI:57945"/>
        <dbReference type="EC" id="1.6.2.2"/>
    </reaction>
    <physiologicalReaction direction="left-to-right" evidence="1">
        <dbReference type="Rhea" id="RHEA:46681"/>
    </physiologicalReaction>
</comment>
<comment type="cofactor">
    <cofactor evidence="1">
        <name>FAD</name>
        <dbReference type="ChEBI" id="CHEBI:57692"/>
    </cofactor>
</comment>
<comment type="subunit">
    <text evidence="4 5">Component of a complex composed of cytochrome b5, NADH-cytochrome b5 reductase (CYB5R3) and MTARC2 (By similarity). Interacts with MTLN; the interaction is required to maintain cellular lipid composition and leads to stimulation of mitochondrial respiratory complex I activity (By similarity).</text>
</comment>
<comment type="subcellular location">
    <subcellularLocation>
        <location evidence="3">Endoplasmic reticulum membrane</location>
        <topology evidence="3">Lipid-anchor</topology>
        <orientation evidence="3">Cytoplasmic side</orientation>
    </subcellularLocation>
    <subcellularLocation>
        <location evidence="3">Mitochondrion outer membrane</location>
        <topology evidence="3">Lipid-anchor</topology>
        <orientation evidence="3">Cytoplasmic side</orientation>
    </subcellularLocation>
</comment>
<comment type="alternative products">
    <event type="alternative promoter"/>
    <isoform>
        <id>Q60HG4-1</id>
        <name>1</name>
        <name>M</name>
        <sequence type="displayed"/>
    </isoform>
    <isoform>
        <id>Q60HG4-2</id>
        <name>2</name>
        <name>S</name>
        <sequence type="described" ref="VSP_013359"/>
    </isoform>
</comment>
<comment type="similarity">
    <text evidence="7">Belongs to the flavoprotein pyridine nucleotide cytochrome reductase family.</text>
</comment>